<gene>
    <name evidence="1" type="primary">gpsA</name>
    <name type="ordered locus">CYB_0350</name>
</gene>
<evidence type="ECO:0000255" key="1">
    <source>
        <dbReference type="HAMAP-Rule" id="MF_00394"/>
    </source>
</evidence>
<name>GPDA_SYNJB</name>
<comment type="function">
    <text evidence="1">Catalyzes the reduction of the glycolytic intermediate dihydroxyacetone phosphate (DHAP) to sn-glycerol 3-phosphate (G3P), the key precursor for phospholipid synthesis.</text>
</comment>
<comment type="catalytic activity">
    <reaction evidence="1">
        <text>sn-glycerol 3-phosphate + NAD(+) = dihydroxyacetone phosphate + NADH + H(+)</text>
        <dbReference type="Rhea" id="RHEA:11092"/>
        <dbReference type="ChEBI" id="CHEBI:15378"/>
        <dbReference type="ChEBI" id="CHEBI:57540"/>
        <dbReference type="ChEBI" id="CHEBI:57597"/>
        <dbReference type="ChEBI" id="CHEBI:57642"/>
        <dbReference type="ChEBI" id="CHEBI:57945"/>
        <dbReference type="EC" id="1.1.1.94"/>
    </reaction>
    <physiologicalReaction direction="right-to-left" evidence="1">
        <dbReference type="Rhea" id="RHEA:11094"/>
    </physiologicalReaction>
</comment>
<comment type="catalytic activity">
    <reaction evidence="1">
        <text>sn-glycerol 3-phosphate + NADP(+) = dihydroxyacetone phosphate + NADPH + H(+)</text>
        <dbReference type="Rhea" id="RHEA:11096"/>
        <dbReference type="ChEBI" id="CHEBI:15378"/>
        <dbReference type="ChEBI" id="CHEBI:57597"/>
        <dbReference type="ChEBI" id="CHEBI:57642"/>
        <dbReference type="ChEBI" id="CHEBI:57783"/>
        <dbReference type="ChEBI" id="CHEBI:58349"/>
        <dbReference type="EC" id="1.1.1.94"/>
    </reaction>
    <physiologicalReaction direction="right-to-left" evidence="1">
        <dbReference type="Rhea" id="RHEA:11098"/>
    </physiologicalReaction>
</comment>
<comment type="pathway">
    <text evidence="1">Membrane lipid metabolism; glycerophospholipid metabolism.</text>
</comment>
<comment type="subcellular location">
    <subcellularLocation>
        <location evidence="1">Cytoplasm</location>
    </subcellularLocation>
</comment>
<comment type="similarity">
    <text evidence="1">Belongs to the NAD-dependent glycerol-3-phosphate dehydrogenase family.</text>
</comment>
<proteinExistence type="inferred from homology"/>
<accession>Q2JPE4</accession>
<organism>
    <name type="scientific">Synechococcus sp. (strain JA-2-3B'a(2-13))</name>
    <name type="common">Cyanobacteria bacterium Yellowstone B-Prime</name>
    <dbReference type="NCBI Taxonomy" id="321332"/>
    <lineage>
        <taxon>Bacteria</taxon>
        <taxon>Bacillati</taxon>
        <taxon>Cyanobacteriota</taxon>
        <taxon>Cyanophyceae</taxon>
        <taxon>Synechococcales</taxon>
        <taxon>Synechococcaceae</taxon>
        <taxon>Synechococcus</taxon>
    </lineage>
</organism>
<keyword id="KW-0963">Cytoplasm</keyword>
<keyword id="KW-0444">Lipid biosynthesis</keyword>
<keyword id="KW-0443">Lipid metabolism</keyword>
<keyword id="KW-0520">NAD</keyword>
<keyword id="KW-0521">NADP</keyword>
<keyword id="KW-0547">Nucleotide-binding</keyword>
<keyword id="KW-0560">Oxidoreductase</keyword>
<keyword id="KW-0594">Phospholipid biosynthesis</keyword>
<keyword id="KW-1208">Phospholipid metabolism</keyword>
<keyword id="KW-1185">Reference proteome</keyword>
<sequence length="315" mass="32969">MNTSAEGQSPTSPQSVAILGAGAWGSTLAMLAQGQGHRVRVWNRRKGLDLAEVLQGSQILISAVSMAGVRPVVEAVRQVGIPPQAILVSATKGLDPLQLLTPTQIWGATFPEQPLVVLSGPNLSAEIRQGLPAAAVVASRDPWAAVQVQYALSSERFRLYTSSDPLGVELGGTLKNVIAIAVGVCDGLQLGANARAALVTRGLAEMIRVGSKLGARAETFNGLSGLGDLLATCHSRLSRNYRVGYGLGQGQPLSQILAEIEGTAEGVYTAPVVVEIAAQHGIQVPITQEVHLLLQGQTTPTAALTRLMERQLTSE</sequence>
<dbReference type="EC" id="1.1.1.94" evidence="1"/>
<dbReference type="EMBL" id="CP000240">
    <property type="protein sequence ID" value="ABD01346.1"/>
    <property type="molecule type" value="Genomic_DNA"/>
</dbReference>
<dbReference type="RefSeq" id="WP_011432015.1">
    <property type="nucleotide sequence ID" value="NC_007776.1"/>
</dbReference>
<dbReference type="SMR" id="Q2JPE4"/>
<dbReference type="STRING" id="321332.CYB_0350"/>
<dbReference type="KEGG" id="cyb:CYB_0350"/>
<dbReference type="eggNOG" id="COG0240">
    <property type="taxonomic scope" value="Bacteria"/>
</dbReference>
<dbReference type="HOGENOM" id="CLU_033449_0_2_3"/>
<dbReference type="OrthoDB" id="9812273at2"/>
<dbReference type="UniPathway" id="UPA00940"/>
<dbReference type="Proteomes" id="UP000001938">
    <property type="component" value="Chromosome"/>
</dbReference>
<dbReference type="GO" id="GO:0005829">
    <property type="term" value="C:cytosol"/>
    <property type="evidence" value="ECO:0007669"/>
    <property type="project" value="TreeGrafter"/>
</dbReference>
<dbReference type="GO" id="GO:0047952">
    <property type="term" value="F:glycerol-3-phosphate dehydrogenase [NAD(P)+] activity"/>
    <property type="evidence" value="ECO:0007669"/>
    <property type="project" value="UniProtKB-UniRule"/>
</dbReference>
<dbReference type="GO" id="GO:0051287">
    <property type="term" value="F:NAD binding"/>
    <property type="evidence" value="ECO:0007669"/>
    <property type="project" value="InterPro"/>
</dbReference>
<dbReference type="GO" id="GO:0005975">
    <property type="term" value="P:carbohydrate metabolic process"/>
    <property type="evidence" value="ECO:0007669"/>
    <property type="project" value="InterPro"/>
</dbReference>
<dbReference type="GO" id="GO:0046167">
    <property type="term" value="P:glycerol-3-phosphate biosynthetic process"/>
    <property type="evidence" value="ECO:0007669"/>
    <property type="project" value="UniProtKB-UniRule"/>
</dbReference>
<dbReference type="GO" id="GO:0046168">
    <property type="term" value="P:glycerol-3-phosphate catabolic process"/>
    <property type="evidence" value="ECO:0007669"/>
    <property type="project" value="InterPro"/>
</dbReference>
<dbReference type="GO" id="GO:0006650">
    <property type="term" value="P:glycerophospholipid metabolic process"/>
    <property type="evidence" value="ECO:0007669"/>
    <property type="project" value="UniProtKB-UniRule"/>
</dbReference>
<dbReference type="GO" id="GO:0008654">
    <property type="term" value="P:phospholipid biosynthetic process"/>
    <property type="evidence" value="ECO:0007669"/>
    <property type="project" value="UniProtKB-KW"/>
</dbReference>
<dbReference type="FunFam" id="1.10.1040.10:FF:000001">
    <property type="entry name" value="Glycerol-3-phosphate dehydrogenase [NAD(P)+]"/>
    <property type="match status" value="1"/>
</dbReference>
<dbReference type="FunFam" id="3.40.50.720:FF:001174">
    <property type="entry name" value="Glycerol-3-phosphate dehydrogenase [NAD(P)+]"/>
    <property type="match status" value="1"/>
</dbReference>
<dbReference type="Gene3D" id="1.10.1040.10">
    <property type="entry name" value="N-(1-d-carboxylethyl)-l-norvaline Dehydrogenase, domain 2"/>
    <property type="match status" value="1"/>
</dbReference>
<dbReference type="Gene3D" id="3.40.50.720">
    <property type="entry name" value="NAD(P)-binding Rossmann-like Domain"/>
    <property type="match status" value="2"/>
</dbReference>
<dbReference type="HAMAP" id="MF_00394">
    <property type="entry name" value="NAD_Glyc3P_dehydrog"/>
    <property type="match status" value="1"/>
</dbReference>
<dbReference type="InterPro" id="IPR008927">
    <property type="entry name" value="6-PGluconate_DH-like_C_sf"/>
</dbReference>
<dbReference type="InterPro" id="IPR013328">
    <property type="entry name" value="6PGD_dom2"/>
</dbReference>
<dbReference type="InterPro" id="IPR006168">
    <property type="entry name" value="G3P_DH_NAD-dep"/>
</dbReference>
<dbReference type="InterPro" id="IPR006109">
    <property type="entry name" value="G3P_DH_NAD-dep_C"/>
</dbReference>
<dbReference type="InterPro" id="IPR011128">
    <property type="entry name" value="G3P_DH_NAD-dep_N"/>
</dbReference>
<dbReference type="InterPro" id="IPR036291">
    <property type="entry name" value="NAD(P)-bd_dom_sf"/>
</dbReference>
<dbReference type="NCBIfam" id="NF000940">
    <property type="entry name" value="PRK00094.1-2"/>
    <property type="match status" value="1"/>
</dbReference>
<dbReference type="NCBIfam" id="NF000942">
    <property type="entry name" value="PRK00094.1-4"/>
    <property type="match status" value="1"/>
</dbReference>
<dbReference type="NCBIfam" id="NF011212">
    <property type="entry name" value="PRK14619.1"/>
    <property type="match status" value="1"/>
</dbReference>
<dbReference type="PANTHER" id="PTHR11728">
    <property type="entry name" value="GLYCEROL-3-PHOSPHATE DEHYDROGENASE"/>
    <property type="match status" value="1"/>
</dbReference>
<dbReference type="PANTHER" id="PTHR11728:SF1">
    <property type="entry name" value="GLYCEROL-3-PHOSPHATE DEHYDROGENASE [NAD(+)] 2, CHLOROPLASTIC"/>
    <property type="match status" value="1"/>
</dbReference>
<dbReference type="Pfam" id="PF07479">
    <property type="entry name" value="NAD_Gly3P_dh_C"/>
    <property type="match status" value="1"/>
</dbReference>
<dbReference type="Pfam" id="PF01210">
    <property type="entry name" value="NAD_Gly3P_dh_N"/>
    <property type="match status" value="2"/>
</dbReference>
<dbReference type="PIRSF" id="PIRSF000114">
    <property type="entry name" value="Glycerol-3-P_dh"/>
    <property type="match status" value="1"/>
</dbReference>
<dbReference type="SUPFAM" id="SSF48179">
    <property type="entry name" value="6-phosphogluconate dehydrogenase C-terminal domain-like"/>
    <property type="match status" value="1"/>
</dbReference>
<dbReference type="SUPFAM" id="SSF51735">
    <property type="entry name" value="NAD(P)-binding Rossmann-fold domains"/>
    <property type="match status" value="1"/>
</dbReference>
<dbReference type="PROSITE" id="PS00957">
    <property type="entry name" value="NAD_G3PDH"/>
    <property type="match status" value="1"/>
</dbReference>
<feature type="chain" id="PRO_0000255387" description="Glycerol-3-phosphate dehydrogenase [NAD(P)+]">
    <location>
        <begin position="1"/>
        <end position="315"/>
    </location>
</feature>
<feature type="active site" description="Proton acceptor" evidence="1">
    <location>
        <position position="175"/>
    </location>
</feature>
<feature type="binding site" evidence="1">
    <location>
        <position position="24"/>
    </location>
    <ligand>
        <name>NADPH</name>
        <dbReference type="ChEBI" id="CHEBI:57783"/>
    </ligand>
</feature>
<feature type="binding site" evidence="1">
    <location>
        <position position="44"/>
    </location>
    <ligand>
        <name>NADPH</name>
        <dbReference type="ChEBI" id="CHEBI:57783"/>
    </ligand>
</feature>
<feature type="binding site" evidence="1">
    <location>
        <position position="45"/>
    </location>
    <ligand>
        <name>NADPH</name>
        <dbReference type="ChEBI" id="CHEBI:57783"/>
    </ligand>
</feature>
<feature type="binding site" evidence="1">
    <location>
        <position position="92"/>
    </location>
    <ligand>
        <name>NADPH</name>
        <dbReference type="ChEBI" id="CHEBI:57783"/>
    </ligand>
</feature>
<feature type="binding site" evidence="1">
    <location>
        <position position="92"/>
    </location>
    <ligand>
        <name>sn-glycerol 3-phosphate</name>
        <dbReference type="ChEBI" id="CHEBI:57597"/>
    </ligand>
</feature>
<feature type="binding site" evidence="1">
    <location>
        <position position="120"/>
    </location>
    <ligand>
        <name>sn-glycerol 3-phosphate</name>
        <dbReference type="ChEBI" id="CHEBI:57597"/>
    </ligand>
</feature>
<feature type="binding site" evidence="1">
    <location>
        <position position="124"/>
    </location>
    <ligand>
        <name>NADPH</name>
        <dbReference type="ChEBI" id="CHEBI:57783"/>
    </ligand>
</feature>
<feature type="binding site" evidence="1">
    <location>
        <position position="175"/>
    </location>
    <ligand>
        <name>sn-glycerol 3-phosphate</name>
        <dbReference type="ChEBI" id="CHEBI:57597"/>
    </ligand>
</feature>
<feature type="binding site" evidence="1">
    <location>
        <position position="228"/>
    </location>
    <ligand>
        <name>sn-glycerol 3-phosphate</name>
        <dbReference type="ChEBI" id="CHEBI:57597"/>
    </ligand>
</feature>
<feature type="binding site" evidence="1">
    <location>
        <position position="238"/>
    </location>
    <ligand>
        <name>sn-glycerol 3-phosphate</name>
        <dbReference type="ChEBI" id="CHEBI:57597"/>
    </ligand>
</feature>
<feature type="binding site" evidence="1">
    <location>
        <position position="239"/>
    </location>
    <ligand>
        <name>NADPH</name>
        <dbReference type="ChEBI" id="CHEBI:57783"/>
    </ligand>
</feature>
<feature type="binding site" evidence="1">
    <location>
        <position position="239"/>
    </location>
    <ligand>
        <name>sn-glycerol 3-phosphate</name>
        <dbReference type="ChEBI" id="CHEBI:57597"/>
    </ligand>
</feature>
<feature type="binding site" evidence="1">
    <location>
        <position position="240"/>
    </location>
    <ligand>
        <name>sn-glycerol 3-phosphate</name>
        <dbReference type="ChEBI" id="CHEBI:57597"/>
    </ligand>
</feature>
<feature type="binding site" evidence="1">
    <location>
        <position position="265"/>
    </location>
    <ligand>
        <name>NADPH</name>
        <dbReference type="ChEBI" id="CHEBI:57783"/>
    </ligand>
</feature>
<reference key="1">
    <citation type="journal article" date="2007" name="ISME J.">
        <title>Population level functional diversity in a microbial community revealed by comparative genomic and metagenomic analyses.</title>
        <authorList>
            <person name="Bhaya D."/>
            <person name="Grossman A.R."/>
            <person name="Steunou A.-S."/>
            <person name="Khuri N."/>
            <person name="Cohan F.M."/>
            <person name="Hamamura N."/>
            <person name="Melendrez M.C."/>
            <person name="Bateson M.M."/>
            <person name="Ward D.M."/>
            <person name="Heidelberg J.F."/>
        </authorList>
    </citation>
    <scope>NUCLEOTIDE SEQUENCE [LARGE SCALE GENOMIC DNA]</scope>
    <source>
        <strain>JA-2-3B'a(2-13)</strain>
    </source>
</reference>
<protein>
    <recommendedName>
        <fullName evidence="1">Glycerol-3-phosphate dehydrogenase [NAD(P)+]</fullName>
        <ecNumber evidence="1">1.1.1.94</ecNumber>
    </recommendedName>
    <alternativeName>
        <fullName evidence="1">NAD(P)(+)-dependent glycerol-3-phosphate dehydrogenase</fullName>
    </alternativeName>
    <alternativeName>
        <fullName evidence="1">NAD(P)H-dependent dihydroxyacetone-phosphate reductase</fullName>
    </alternativeName>
</protein>